<dbReference type="EMBL" id="AC007060">
    <property type="protein sequence ID" value="AAD25764.1"/>
    <property type="status" value="ALT_SEQ"/>
    <property type="molecule type" value="Genomic_DNA"/>
</dbReference>
<dbReference type="EMBL" id="CP002684">
    <property type="protein sequence ID" value="AEE31268.1"/>
    <property type="molecule type" value="Genomic_DNA"/>
</dbReference>
<dbReference type="EMBL" id="CP002684">
    <property type="protein sequence ID" value="ANM58089.1"/>
    <property type="molecule type" value="Genomic_DNA"/>
</dbReference>
<dbReference type="EMBL" id="CP002684">
    <property type="protein sequence ID" value="ANM58091.1"/>
    <property type="molecule type" value="Genomic_DNA"/>
</dbReference>
<dbReference type="EMBL" id="AY099867">
    <property type="protein sequence ID" value="AAM20718.1"/>
    <property type="molecule type" value="mRNA"/>
</dbReference>
<dbReference type="PIR" id="C86433">
    <property type="entry name" value="C86433"/>
</dbReference>
<dbReference type="RefSeq" id="NP_001320549.1">
    <property type="nucleotide sequence ID" value="NM_001332926.1"/>
</dbReference>
<dbReference type="RefSeq" id="NP_001320551.1">
    <property type="nucleotide sequence ID" value="NM_001332925.1"/>
</dbReference>
<dbReference type="RefSeq" id="NP_564362.1">
    <property type="nucleotide sequence ID" value="NM_102812.3"/>
</dbReference>
<dbReference type="SMR" id="Q9SA91"/>
<dbReference type="FunCoup" id="Q9SA91">
    <property type="interactions" value="207"/>
</dbReference>
<dbReference type="STRING" id="3702.Q8L5Y3"/>
<dbReference type="iPTMnet" id="Q9SA91"/>
<dbReference type="PaxDb" id="3702-AT1G30755.1"/>
<dbReference type="ProteomicsDB" id="175574"/>
<dbReference type="EnsemblPlants" id="AT1G30755.1">
    <property type="protein sequence ID" value="AT1G30755.1"/>
    <property type="gene ID" value="AT1G30755"/>
</dbReference>
<dbReference type="EnsemblPlants" id="AT1G30755.5">
    <property type="protein sequence ID" value="AT1G30755.5"/>
    <property type="gene ID" value="AT1G30755"/>
</dbReference>
<dbReference type="EnsemblPlants" id="AT1G30755.6">
    <property type="protein sequence ID" value="AT1G30755.6"/>
    <property type="gene ID" value="AT1G30755"/>
</dbReference>
<dbReference type="GeneID" id="839956"/>
<dbReference type="Gramene" id="AT1G30755.1">
    <property type="protein sequence ID" value="AT1G30755.1"/>
    <property type="gene ID" value="AT1G30755"/>
</dbReference>
<dbReference type="Gramene" id="AT1G30755.5">
    <property type="protein sequence ID" value="AT1G30755.5"/>
    <property type="gene ID" value="AT1G30755"/>
</dbReference>
<dbReference type="Gramene" id="AT1G30755.6">
    <property type="protein sequence ID" value="AT1G30755.6"/>
    <property type="gene ID" value="AT1G30755"/>
</dbReference>
<dbReference type="KEGG" id="ath:AT1G30755"/>
<dbReference type="Araport" id="AT1G30755"/>
<dbReference type="TAIR" id="AT1G30755">
    <property type="gene designation" value="PSI2"/>
</dbReference>
<dbReference type="eggNOG" id="ENOG502QUNR">
    <property type="taxonomic scope" value="Eukaryota"/>
</dbReference>
<dbReference type="HOGENOM" id="CLU_022639_0_0_1"/>
<dbReference type="InParanoid" id="Q9SA91"/>
<dbReference type="OMA" id="CYIRQTI"/>
<dbReference type="OrthoDB" id="2020544at2759"/>
<dbReference type="PRO" id="PR:Q9SA91"/>
<dbReference type="Proteomes" id="UP000006548">
    <property type="component" value="Chromosome 1"/>
</dbReference>
<dbReference type="ExpressionAtlas" id="Q9SA91">
    <property type="expression patterns" value="baseline and differential"/>
</dbReference>
<dbReference type="GO" id="GO:0005634">
    <property type="term" value="C:nucleus"/>
    <property type="evidence" value="ECO:0000314"/>
    <property type="project" value="UniProtKB"/>
</dbReference>
<dbReference type="GO" id="GO:0003746">
    <property type="term" value="F:translation elongation factor activity"/>
    <property type="evidence" value="ECO:0007669"/>
    <property type="project" value="UniProtKB-KW"/>
</dbReference>
<dbReference type="GO" id="GO:0045927">
    <property type="term" value="P:positive regulation of growth"/>
    <property type="evidence" value="ECO:0000315"/>
    <property type="project" value="UniProtKB"/>
</dbReference>
<dbReference type="GO" id="GO:0043434">
    <property type="term" value="P:response to peptide hormone"/>
    <property type="evidence" value="ECO:0000315"/>
    <property type="project" value="UniProtKB"/>
</dbReference>
<dbReference type="InterPro" id="IPR021864">
    <property type="entry name" value="DUF3475"/>
</dbReference>
<dbReference type="InterPro" id="IPR007700">
    <property type="entry name" value="DUF668"/>
</dbReference>
<dbReference type="InterPro" id="IPR045021">
    <property type="entry name" value="PSI1/2/3"/>
</dbReference>
<dbReference type="PANTHER" id="PTHR31730">
    <property type="entry name" value="OS01G0873900 PROTEIN"/>
    <property type="match status" value="1"/>
</dbReference>
<dbReference type="PANTHER" id="PTHR31730:SF18">
    <property type="entry name" value="PROTEIN PSK SIMULATOR 2"/>
    <property type="match status" value="1"/>
</dbReference>
<dbReference type="Pfam" id="PF11961">
    <property type="entry name" value="DUF3475"/>
    <property type="match status" value="1"/>
</dbReference>
<dbReference type="Pfam" id="PF05003">
    <property type="entry name" value="DUF668"/>
    <property type="match status" value="1"/>
</dbReference>
<feature type="initiator methionine" description="Removed" evidence="1">
    <location>
        <position position="1"/>
    </location>
</feature>
<feature type="chain" id="PRO_0000449315" description="Protein PSK SIMULATOR 2">
    <location>
        <begin position="2"/>
        <end position="615"/>
    </location>
</feature>
<feature type="region of interest" description="Disordered" evidence="2">
    <location>
        <begin position="16"/>
        <end position="59"/>
    </location>
</feature>
<feature type="region of interest" description="Disordered" evidence="2">
    <location>
        <begin position="506"/>
        <end position="529"/>
    </location>
</feature>
<feature type="compositionally biased region" description="Basic and acidic residues" evidence="2">
    <location>
        <begin position="16"/>
        <end position="27"/>
    </location>
</feature>
<feature type="compositionally biased region" description="Low complexity" evidence="2">
    <location>
        <begin position="42"/>
        <end position="52"/>
    </location>
</feature>
<feature type="compositionally biased region" description="Polar residues" evidence="2">
    <location>
        <begin position="512"/>
        <end position="529"/>
    </location>
</feature>
<feature type="lipid moiety-binding region" description="N-myristoyl glycine" evidence="1">
    <location>
        <position position="2"/>
    </location>
</feature>
<protein>
    <recommendedName>
        <fullName evidence="4">Protein PSK SIMULATOR 2</fullName>
        <shortName evidence="4">AtPSI2</shortName>
    </recommendedName>
</protein>
<reference key="1">
    <citation type="journal article" date="2000" name="Nature">
        <title>Sequence and analysis of chromosome 1 of the plant Arabidopsis thaliana.</title>
        <authorList>
            <person name="Theologis A."/>
            <person name="Ecker J.R."/>
            <person name="Palm C.J."/>
            <person name="Federspiel N.A."/>
            <person name="Kaul S."/>
            <person name="White O."/>
            <person name="Alonso J."/>
            <person name="Altafi H."/>
            <person name="Araujo R."/>
            <person name="Bowman C.L."/>
            <person name="Brooks S.Y."/>
            <person name="Buehler E."/>
            <person name="Chan A."/>
            <person name="Chao Q."/>
            <person name="Chen H."/>
            <person name="Cheuk R.F."/>
            <person name="Chin C.W."/>
            <person name="Chung M.K."/>
            <person name="Conn L."/>
            <person name="Conway A.B."/>
            <person name="Conway A.R."/>
            <person name="Creasy T.H."/>
            <person name="Dewar K."/>
            <person name="Dunn P."/>
            <person name="Etgu P."/>
            <person name="Feldblyum T.V."/>
            <person name="Feng J.-D."/>
            <person name="Fong B."/>
            <person name="Fujii C.Y."/>
            <person name="Gill J.E."/>
            <person name="Goldsmith A.D."/>
            <person name="Haas B."/>
            <person name="Hansen N.F."/>
            <person name="Hughes B."/>
            <person name="Huizar L."/>
            <person name="Hunter J.L."/>
            <person name="Jenkins J."/>
            <person name="Johnson-Hopson C."/>
            <person name="Khan S."/>
            <person name="Khaykin E."/>
            <person name="Kim C.J."/>
            <person name="Koo H.L."/>
            <person name="Kremenetskaia I."/>
            <person name="Kurtz D.B."/>
            <person name="Kwan A."/>
            <person name="Lam B."/>
            <person name="Langin-Hooper S."/>
            <person name="Lee A."/>
            <person name="Lee J.M."/>
            <person name="Lenz C.A."/>
            <person name="Li J.H."/>
            <person name="Li Y.-P."/>
            <person name="Lin X."/>
            <person name="Liu S.X."/>
            <person name="Liu Z.A."/>
            <person name="Luros J.S."/>
            <person name="Maiti R."/>
            <person name="Marziali A."/>
            <person name="Militscher J."/>
            <person name="Miranda M."/>
            <person name="Nguyen M."/>
            <person name="Nierman W.C."/>
            <person name="Osborne B.I."/>
            <person name="Pai G."/>
            <person name="Peterson J."/>
            <person name="Pham P.K."/>
            <person name="Rizzo M."/>
            <person name="Rooney T."/>
            <person name="Rowley D."/>
            <person name="Sakano H."/>
            <person name="Salzberg S.L."/>
            <person name="Schwartz J.R."/>
            <person name="Shinn P."/>
            <person name="Southwick A.M."/>
            <person name="Sun H."/>
            <person name="Tallon L.J."/>
            <person name="Tambunga G."/>
            <person name="Toriumi M.J."/>
            <person name="Town C.D."/>
            <person name="Utterback T."/>
            <person name="Van Aken S."/>
            <person name="Vaysberg M."/>
            <person name="Vysotskaia V.S."/>
            <person name="Walker M."/>
            <person name="Wu D."/>
            <person name="Yu G."/>
            <person name="Fraser C.M."/>
            <person name="Venter J.C."/>
            <person name="Davis R.W."/>
        </authorList>
    </citation>
    <scope>NUCLEOTIDE SEQUENCE [LARGE SCALE GENOMIC DNA]</scope>
    <source>
        <strain>cv. Columbia</strain>
    </source>
</reference>
<reference key="2">
    <citation type="journal article" date="2017" name="Plant J.">
        <title>Araport11: a complete reannotation of the Arabidopsis thaliana reference genome.</title>
        <authorList>
            <person name="Cheng C.Y."/>
            <person name="Krishnakumar V."/>
            <person name="Chan A.P."/>
            <person name="Thibaud-Nissen F."/>
            <person name="Schobel S."/>
            <person name="Town C.D."/>
        </authorList>
    </citation>
    <scope>GENOME REANNOTATION</scope>
    <source>
        <strain>cv. Columbia</strain>
    </source>
</reference>
<reference key="3">
    <citation type="journal article" date="2003" name="Science">
        <title>Empirical analysis of transcriptional activity in the Arabidopsis genome.</title>
        <authorList>
            <person name="Yamada K."/>
            <person name="Lim J."/>
            <person name="Dale J.M."/>
            <person name="Chen H."/>
            <person name="Shinn P."/>
            <person name="Palm C.J."/>
            <person name="Southwick A.M."/>
            <person name="Wu H.C."/>
            <person name="Kim C.J."/>
            <person name="Nguyen M."/>
            <person name="Pham P.K."/>
            <person name="Cheuk R.F."/>
            <person name="Karlin-Newmann G."/>
            <person name="Liu S.X."/>
            <person name="Lam B."/>
            <person name="Sakano H."/>
            <person name="Wu T."/>
            <person name="Yu G."/>
            <person name="Miranda M."/>
            <person name="Quach H.L."/>
            <person name="Tripp M."/>
            <person name="Chang C.H."/>
            <person name="Lee J.M."/>
            <person name="Toriumi M.J."/>
            <person name="Chan M.M."/>
            <person name="Tang C.C."/>
            <person name="Onodera C.S."/>
            <person name="Deng J.M."/>
            <person name="Akiyama K."/>
            <person name="Ansari Y."/>
            <person name="Arakawa T."/>
            <person name="Banh J."/>
            <person name="Banno F."/>
            <person name="Bowser L."/>
            <person name="Brooks S.Y."/>
            <person name="Carninci P."/>
            <person name="Chao Q."/>
            <person name="Choy N."/>
            <person name="Enju A."/>
            <person name="Goldsmith A.D."/>
            <person name="Gurjal M."/>
            <person name="Hansen N.F."/>
            <person name="Hayashizaki Y."/>
            <person name="Johnson-Hopson C."/>
            <person name="Hsuan V.W."/>
            <person name="Iida K."/>
            <person name="Karnes M."/>
            <person name="Khan S."/>
            <person name="Koesema E."/>
            <person name="Ishida J."/>
            <person name="Jiang P.X."/>
            <person name="Jones T."/>
            <person name="Kawai J."/>
            <person name="Kamiya A."/>
            <person name="Meyers C."/>
            <person name="Nakajima M."/>
            <person name="Narusaka M."/>
            <person name="Seki M."/>
            <person name="Sakurai T."/>
            <person name="Satou M."/>
            <person name="Tamse R."/>
            <person name="Vaysberg M."/>
            <person name="Wallender E.K."/>
            <person name="Wong C."/>
            <person name="Yamamura Y."/>
            <person name="Yuan S."/>
            <person name="Shinozaki K."/>
            <person name="Davis R.W."/>
            <person name="Theologis A."/>
            <person name="Ecker J.R."/>
        </authorList>
    </citation>
    <scope>NUCLEOTIDE SEQUENCE [LARGE SCALE MRNA]</scope>
    <source>
        <strain>cv. Columbia</strain>
    </source>
</reference>
<reference key="4">
    <citation type="journal article" date="2014" name="Plant Mol. Biol.">
        <title>The PSI family of nuclear proteins is required for growth in arabidopsis.</title>
        <authorList>
            <person name="Stuehrwohldt N."/>
            <person name="Hartmann J."/>
            <person name="Dahlke R.I."/>
            <person name="Oecking C."/>
            <person name="Sauter M."/>
        </authorList>
    </citation>
    <scope>FUNCTION</scope>
    <scope>DISRUPTION PHENOTYPE</scope>
    <scope>SUBCELLULAR LOCATION</scope>
    <source>
        <strain>cv. Columbia</strain>
    </source>
</reference>
<proteinExistence type="evidence at transcript level"/>
<comment type="function">
    <text evidence="3">Promotes seedling growth probably via the regulation of phytosulfokine (PSK) signaling; PSK are peptide phytohormones acting as growth factors (PubMed:25062973). Involved in PSK-induced root growth (PubMed:25062973). Together with PSI1 and PSI3, required during vegetative growth and reproduction (PubMed:25062973).</text>
</comment>
<comment type="subcellular location">
    <subcellularLocation>
        <location evidence="3">Nucleus</location>
    </subcellularLocation>
</comment>
<comment type="disruption phenotype">
    <text evidence="3">Reduced fertility, premature senescence and severe dwarfism in psi2-1 psi3-1 plants due to reduced cell growth and proliferation as well as premature leaf growth arrest.</text>
</comment>
<comment type="sequence caution" evidence="5">
    <conflict type="erroneous gene model prediction">
        <sequence resource="EMBL-CDS" id="AAD25764"/>
    </conflict>
</comment>
<name>PSI2_ARATH</name>
<evidence type="ECO:0000255" key="1"/>
<evidence type="ECO:0000256" key="2">
    <source>
        <dbReference type="SAM" id="MobiDB-lite"/>
    </source>
</evidence>
<evidence type="ECO:0000269" key="3">
    <source>
    </source>
</evidence>
<evidence type="ECO:0000303" key="4">
    <source>
    </source>
</evidence>
<evidence type="ECO:0000305" key="5"/>
<evidence type="ECO:0000312" key="6">
    <source>
        <dbReference type="Araport" id="AT1G30755"/>
    </source>
</evidence>
<evidence type="ECO:0000312" key="7">
    <source>
        <dbReference type="EMBL" id="AAD25764.1"/>
    </source>
</evidence>
<accession>Q9SA91</accession>
<accession>Q8L5Y3</accession>
<organism>
    <name type="scientific">Arabidopsis thaliana</name>
    <name type="common">Mouse-ear cress</name>
    <dbReference type="NCBI Taxonomy" id="3702"/>
    <lineage>
        <taxon>Eukaryota</taxon>
        <taxon>Viridiplantae</taxon>
        <taxon>Streptophyta</taxon>
        <taxon>Embryophyta</taxon>
        <taxon>Tracheophyta</taxon>
        <taxon>Spermatophyta</taxon>
        <taxon>Magnoliopsida</taxon>
        <taxon>eudicotyledons</taxon>
        <taxon>Gunneridae</taxon>
        <taxon>Pentapetalae</taxon>
        <taxon>rosids</taxon>
        <taxon>malvids</taxon>
        <taxon>Brassicales</taxon>
        <taxon>Brassicaceae</taxon>
        <taxon>Camelineae</taxon>
        <taxon>Arabidopsis</taxon>
    </lineage>
</organism>
<sequence length="615" mass="69395">MGGVCSCVFKDDDKKKKLRSNDDDKSRGFSGKLKSMRRSKTSDSYYSDNYGGSRRKSSKPDEVVFNFSGELGPMPPLRNDSTKFMQRNSFMGRAGVMGLEKAVEVLDTLGSSMTRMNPSNAYLSGVTSSRGGKVTILAFEVANTIAKGAALLQSLSEENLKFMKKDMLHSEEVKKLVSTDTTELQILAASDKREELDLFSGEVIRFGNMCKDLQWHNLDRYFMKLDTENSQHKLLKDDAEARMQELVTLARITSELYHELQALDRFEQDYRRKLAEVESLNLPRRGEGIVILQNELKQQKKLVKSLQKKSLWSQNLAEIIEKLVDVVSYIRQTIVEVFGNNGLRDNEGEQGRERLGEAGLSLHYANLIQQIDNIASRPSSLPSNVRDTLYNALPATVKTALRPRLQTLDQEEELSVPEIKAEMEKSLQWLVPFAENTTKAHQGFGWVGEWANSRIEFGKGKGKGENNGNPTRLQTLHHADKPIVDSYVLELVVWLHRLMKSSKKRAHGVKLQETNHVSPPNNRTISNTQLSLSPDFTYKNQLSLEDRLLLDRVQSIRFGPNLSKSQELVGLKKNKKGFKIWALSRSTGNSPKVDLSDKNSSSDLDVLDGLDFAFQ</sequence>
<keyword id="KW-0217">Developmental protein</keyword>
<keyword id="KW-0251">Elongation factor</keyword>
<keyword id="KW-0449">Lipoprotein</keyword>
<keyword id="KW-0519">Myristate</keyword>
<keyword id="KW-0539">Nucleus</keyword>
<keyword id="KW-0648">Protein biosynthesis</keyword>
<keyword id="KW-1185">Reference proteome</keyword>
<gene>
    <name evidence="4" type="primary">PSI2</name>
    <name evidence="6" type="ordered locus">At1g30755</name>
    <name evidence="7" type="ORF">T5I8.21</name>
</gene>